<keyword id="KW-0256">Endoplasmic reticulum</keyword>
<keyword id="KW-0443">Lipid metabolism</keyword>
<keyword id="KW-0472">Membrane</keyword>
<keyword id="KW-0520">NAD</keyword>
<keyword id="KW-0560">Oxidoreductase</keyword>
<keyword id="KW-1185">Reference proteome</keyword>
<keyword id="KW-0755">Steroidogenesis</keyword>
<keyword id="KW-0812">Transmembrane</keyword>
<keyword id="KW-1133">Transmembrane helix</keyword>
<evidence type="ECO:0000250" key="1"/>
<evidence type="ECO:0000255" key="2"/>
<evidence type="ECO:0000269" key="3">
    <source>
    </source>
</evidence>
<evidence type="ECO:0000269" key="4">
    <source>
    </source>
</evidence>
<evidence type="ECO:0000305" key="5"/>
<evidence type="ECO:0000305" key="6">
    <source>
    </source>
</evidence>
<evidence type="ECO:0000312" key="7">
    <source>
        <dbReference type="MGI" id="MGI:2141879"/>
    </source>
</evidence>
<sequence length="369" mass="41135">MADSAQVPTLVYLVTGGCGFLGEHIVRMLLEREPRLRELRVFDLHLSSWLEELKAGPVQVTAIQGDVTQAHEVAAAMSGSHVVIHTAGLVDVFGKASPKTIHKVNVQGTQNVIDACVQTGTQYLVYTSSMEVVGPNIKGHPFYRGNEDTPYEAVHSHPYPCSKALAEQLVLEANGRKVNGGLPLVTCALRPTGIYGEGHQVMRDFYYQGLRFGGRLFRAVPASVEHGRVYVGNVAWMHILVARELEQRAALMGGQVYFCYDKSPYKSYEDFNMEFLSPCGLRLIGAHPLLPYWLLVLLATLNALLQWLLRPLVLYTPLLNPYTLAMANTTFTVSTNKAQRHFGYKPLFSWEESRTRTIQWVQAMEGSAR</sequence>
<name>3BHS7_MOUSE</name>
<organism>
    <name type="scientific">Mus musculus</name>
    <name type="common">Mouse</name>
    <dbReference type="NCBI Taxonomy" id="10090"/>
    <lineage>
        <taxon>Eukaryota</taxon>
        <taxon>Metazoa</taxon>
        <taxon>Chordata</taxon>
        <taxon>Craniata</taxon>
        <taxon>Vertebrata</taxon>
        <taxon>Euteleostomi</taxon>
        <taxon>Mammalia</taxon>
        <taxon>Eutheria</taxon>
        <taxon>Euarchontoglires</taxon>
        <taxon>Glires</taxon>
        <taxon>Rodentia</taxon>
        <taxon>Myomorpha</taxon>
        <taxon>Muroidea</taxon>
        <taxon>Muridae</taxon>
        <taxon>Murinae</taxon>
        <taxon>Mus</taxon>
        <taxon>Mus</taxon>
    </lineage>
</organism>
<accession>Q9EQC1</accession>
<accession>A2RTR5</accession>
<dbReference type="EC" id="1.1.1.-"/>
<dbReference type="EC" id="1.1.1.181" evidence="3"/>
<dbReference type="EMBL" id="AF277718">
    <property type="protein sequence ID" value="AAG37823.1"/>
    <property type="molecule type" value="mRNA"/>
</dbReference>
<dbReference type="EMBL" id="BC132605">
    <property type="protein sequence ID" value="AAI32606.1"/>
    <property type="molecule type" value="mRNA"/>
</dbReference>
<dbReference type="EMBL" id="BC138589">
    <property type="protein sequence ID" value="AAI38590.1"/>
    <property type="molecule type" value="mRNA"/>
</dbReference>
<dbReference type="CCDS" id="CCDS40145.1"/>
<dbReference type="RefSeq" id="NP_598704.2">
    <property type="nucleotide sequence ID" value="NM_133943.3"/>
</dbReference>
<dbReference type="SMR" id="Q9EQC1"/>
<dbReference type="FunCoup" id="Q9EQC1">
    <property type="interactions" value="114"/>
</dbReference>
<dbReference type="STRING" id="10090.ENSMUSP00000036245"/>
<dbReference type="SwissLipids" id="SLP:000001322"/>
<dbReference type="iPTMnet" id="Q9EQC1"/>
<dbReference type="PhosphoSitePlus" id="Q9EQC1"/>
<dbReference type="SwissPalm" id="Q9EQC1"/>
<dbReference type="jPOST" id="Q9EQC1"/>
<dbReference type="PaxDb" id="10090-ENSMUSP00000036245"/>
<dbReference type="ProteomicsDB" id="285535"/>
<dbReference type="Antibodypedia" id="27526">
    <property type="antibodies" value="184 antibodies from 27 providers"/>
</dbReference>
<dbReference type="DNASU" id="101502"/>
<dbReference type="Ensembl" id="ENSMUST00000046863.12">
    <property type="protein sequence ID" value="ENSMUSP00000036245.6"/>
    <property type="gene ID" value="ENSMUSG00000042289.12"/>
</dbReference>
<dbReference type="GeneID" id="101502"/>
<dbReference type="KEGG" id="mmu:101502"/>
<dbReference type="UCSC" id="uc009jwu.1">
    <property type="organism name" value="mouse"/>
</dbReference>
<dbReference type="AGR" id="MGI:2141879"/>
<dbReference type="CTD" id="80270"/>
<dbReference type="MGI" id="MGI:2141879">
    <property type="gene designation" value="Hsd3b7"/>
</dbReference>
<dbReference type="VEuPathDB" id="HostDB:ENSMUSG00000042289"/>
<dbReference type="eggNOG" id="KOG1430">
    <property type="taxonomic scope" value="Eukaryota"/>
</dbReference>
<dbReference type="GeneTree" id="ENSGT00940000160236"/>
<dbReference type="HOGENOM" id="CLU_007383_6_3_1"/>
<dbReference type="InParanoid" id="Q9EQC1"/>
<dbReference type="OMA" id="GDHFKRG"/>
<dbReference type="OrthoDB" id="10262413at2759"/>
<dbReference type="PhylomeDB" id="Q9EQC1"/>
<dbReference type="TreeFam" id="TF354279"/>
<dbReference type="Reactome" id="R-MMU-193368">
    <property type="pathway name" value="Synthesis of bile acids and bile salts via 7alpha-hydroxycholesterol"/>
</dbReference>
<dbReference type="Reactome" id="R-MMU-193775">
    <property type="pathway name" value="Synthesis of bile acids and bile salts via 24-hydroxycholesterol"/>
</dbReference>
<dbReference type="Reactome" id="R-MMU-193807">
    <property type="pathway name" value="Synthesis of bile acids and bile salts via 27-hydroxycholesterol"/>
</dbReference>
<dbReference type="UniPathway" id="UPA00062"/>
<dbReference type="BioGRID-ORCS" id="101502">
    <property type="hits" value="2 hits in 81 CRISPR screens"/>
</dbReference>
<dbReference type="ChiTaRS" id="Hsd3b7">
    <property type="organism name" value="mouse"/>
</dbReference>
<dbReference type="PRO" id="PR:Q9EQC1"/>
<dbReference type="Proteomes" id="UP000000589">
    <property type="component" value="Chromosome 7"/>
</dbReference>
<dbReference type="RNAct" id="Q9EQC1">
    <property type="molecule type" value="protein"/>
</dbReference>
<dbReference type="Bgee" id="ENSMUSG00000042289">
    <property type="expression patterns" value="Expressed in hepatobiliary system and 71 other cell types or tissues"/>
</dbReference>
<dbReference type="ExpressionAtlas" id="Q9EQC1">
    <property type="expression patterns" value="baseline and differential"/>
</dbReference>
<dbReference type="GO" id="GO:0005789">
    <property type="term" value="C:endoplasmic reticulum membrane"/>
    <property type="evidence" value="ECO:0007669"/>
    <property type="project" value="UniProtKB-SubCell"/>
</dbReference>
<dbReference type="GO" id="GO:0005811">
    <property type="term" value="C:lipid droplet"/>
    <property type="evidence" value="ECO:0007669"/>
    <property type="project" value="Ensembl"/>
</dbReference>
<dbReference type="GO" id="GO:0047016">
    <property type="term" value="F:cholest-5-ene-3-beta,7-alpha-diol 3-beta-dehydrogenase activity"/>
    <property type="evidence" value="ECO:0000315"/>
    <property type="project" value="UniProtKB"/>
</dbReference>
<dbReference type="GO" id="GO:0035754">
    <property type="term" value="P:B cell chemotaxis"/>
    <property type="evidence" value="ECO:0000315"/>
    <property type="project" value="UniProtKB"/>
</dbReference>
<dbReference type="GO" id="GO:0006694">
    <property type="term" value="P:steroid biosynthetic process"/>
    <property type="evidence" value="ECO:0007669"/>
    <property type="project" value="UniProtKB-UniPathway"/>
</dbReference>
<dbReference type="CDD" id="cd09811">
    <property type="entry name" value="3b-HSD_HSDB1_like_SDR_e"/>
    <property type="match status" value="1"/>
</dbReference>
<dbReference type="FunFam" id="3.40.50.720:FF:000262">
    <property type="entry name" value="3 beta-hydroxysteroid dehydrogenase type 7 isoform X1"/>
    <property type="match status" value="1"/>
</dbReference>
<dbReference type="Gene3D" id="3.40.50.720">
    <property type="entry name" value="NAD(P)-binding Rossmann-like Domain"/>
    <property type="match status" value="1"/>
</dbReference>
<dbReference type="InterPro" id="IPR002225">
    <property type="entry name" value="3Beta_OHSteriod_DH/Estase"/>
</dbReference>
<dbReference type="InterPro" id="IPR036291">
    <property type="entry name" value="NAD(P)-bd_dom_sf"/>
</dbReference>
<dbReference type="InterPro" id="IPR050425">
    <property type="entry name" value="NAD(P)_dehydrat-like"/>
</dbReference>
<dbReference type="PANTHER" id="PTHR10366:SF847">
    <property type="entry name" value="3 BETA-HYDROXYSTEROID DEHYDROGENASE TYPE 7"/>
    <property type="match status" value="1"/>
</dbReference>
<dbReference type="PANTHER" id="PTHR10366">
    <property type="entry name" value="NAD DEPENDENT EPIMERASE/DEHYDRATASE"/>
    <property type="match status" value="1"/>
</dbReference>
<dbReference type="Pfam" id="PF01073">
    <property type="entry name" value="3Beta_HSD"/>
    <property type="match status" value="1"/>
</dbReference>
<dbReference type="SUPFAM" id="SSF51735">
    <property type="entry name" value="NAD(P)-binding Rossmann-fold domains"/>
    <property type="match status" value="1"/>
</dbReference>
<protein>
    <recommendedName>
        <fullName evidence="5">3 beta-hydroxysteroid dehydrogenase type 7</fullName>
    </recommendedName>
    <alternativeName>
        <fullName>3 beta-hydroxysteroid dehydrogenase type VII</fullName>
        <shortName>3-beta-HSD VII</shortName>
    </alternativeName>
    <alternativeName>
        <fullName>3-beta-hydroxy-Delta(5)-C27 steroid oxidoreductase</fullName>
        <shortName>C(27) 3-beta-HSD</shortName>
        <ecNumber>1.1.1.-</ecNumber>
    </alternativeName>
    <alternativeName>
        <fullName>Cholest-5-ene-3-beta,7-alpha-diol 3-beta-dehydrogenase</fullName>
        <ecNumber evidence="3">1.1.1.181</ecNumber>
    </alternativeName>
</protein>
<feature type="chain" id="PRO_0000087792" description="3 beta-hydroxysteroid dehydrogenase type 7">
    <location>
        <begin position="1"/>
        <end position="369"/>
    </location>
</feature>
<feature type="transmembrane region" description="Helical" evidence="2">
    <location>
        <begin position="289"/>
        <end position="309"/>
    </location>
</feature>
<feature type="transmembrane region" description="Helical" evidence="2">
    <location>
        <begin position="312"/>
        <end position="334"/>
    </location>
</feature>
<feature type="active site" description="Proton acceptor" evidence="1">
    <location>
        <position position="159"/>
    </location>
</feature>
<feature type="binding site" evidence="1">
    <location>
        <position position="163"/>
    </location>
    <ligand>
        <name>NAD(+)</name>
        <dbReference type="ChEBI" id="CHEBI:57540"/>
    </ligand>
</feature>
<gene>
    <name evidence="7" type="primary">Hsd3b7</name>
</gene>
<proteinExistence type="evidence at protein level"/>
<comment type="function">
    <text evidence="3 4">The 3-beta-HSD enzymatic system plays a crucial role in the biosynthesis of all classes of hormonal steroids. HSD VII is active against four 7-alpha-hydroxylated sterols. Does not metabolize several different C(19/21) steroids as substrates. Involved in bile acid synthesis (PubMed:11067870). Plays a key role in cell positioning and movement in lymphoid tissues by mediating degradation of 7-alpha,25-dihydroxycholesterol (7-alpha,25-OHC): 7-alpha,25-OHC acts as a ligand for the G protein-coupled receptor GPR183/EBI2, a chemotactic receptor for a number of lymphoid cells (PubMed:22999953).</text>
</comment>
<comment type="catalytic activity">
    <reaction evidence="3">
        <text>7alpha-hydroxycholesterol + NAD(+) = 7alpha-hydroxycholest-4-en-3-one + NADH + H(+)</text>
        <dbReference type="Rhea" id="RHEA:11896"/>
        <dbReference type="ChEBI" id="CHEBI:15378"/>
        <dbReference type="ChEBI" id="CHEBI:17500"/>
        <dbReference type="ChEBI" id="CHEBI:17899"/>
        <dbReference type="ChEBI" id="CHEBI:57540"/>
        <dbReference type="ChEBI" id="CHEBI:57945"/>
        <dbReference type="EC" id="1.1.1.181"/>
    </reaction>
    <physiologicalReaction direction="left-to-right" evidence="6">
        <dbReference type="Rhea" id="RHEA:11897"/>
    </physiologicalReaction>
</comment>
<comment type="catalytic activity">
    <reaction evidence="3">
        <text>7alpha,25-dihydroxycholesterol + NAD(+) = 7alpha,25-dihydroxy-4-cholesten-3-one + NADH + H(+)</text>
        <dbReference type="Rhea" id="RHEA:47156"/>
        <dbReference type="ChEBI" id="CHEBI:15378"/>
        <dbReference type="ChEBI" id="CHEBI:37623"/>
        <dbReference type="ChEBI" id="CHEBI:57540"/>
        <dbReference type="ChEBI" id="CHEBI:57945"/>
        <dbReference type="ChEBI" id="CHEBI:81013"/>
    </reaction>
    <physiologicalReaction direction="left-to-right" evidence="6">
        <dbReference type="Rhea" id="RHEA:47157"/>
    </physiologicalReaction>
</comment>
<comment type="catalytic activity">
    <reaction evidence="3">
        <text>(25R)-cholest-5-en-3beta,7alpha,26-triol + NAD(+) = (25R)-7alpha,26-dihydroxycholest-4-en-3-one + NADH + H(+)</text>
        <dbReference type="Rhea" id="RHEA:47180"/>
        <dbReference type="ChEBI" id="CHEBI:15378"/>
        <dbReference type="ChEBI" id="CHEBI:57540"/>
        <dbReference type="ChEBI" id="CHEBI:57945"/>
        <dbReference type="ChEBI" id="CHEBI:76592"/>
        <dbReference type="ChEBI" id="CHEBI:87476"/>
    </reaction>
    <physiologicalReaction direction="left-to-right" evidence="6">
        <dbReference type="Rhea" id="RHEA:47181"/>
    </physiologicalReaction>
</comment>
<comment type="catalytic activity">
    <reaction evidence="3">
        <text>(24S)-7alpha-dihydroxycholesterol + NAD(+) = (24S)-7alpha,24-dihydroxycholest-4-en-3-one + NADH + H(+)</text>
        <dbReference type="Rhea" id="RHEA:47200"/>
        <dbReference type="ChEBI" id="CHEBI:15378"/>
        <dbReference type="ChEBI" id="CHEBI:37640"/>
        <dbReference type="ChEBI" id="CHEBI:57540"/>
        <dbReference type="ChEBI" id="CHEBI:57945"/>
        <dbReference type="ChEBI" id="CHEBI:63838"/>
    </reaction>
    <physiologicalReaction direction="left-to-right" evidence="6">
        <dbReference type="Rhea" id="RHEA:47201"/>
    </physiologicalReaction>
</comment>
<comment type="pathway">
    <text evidence="3">Lipid metabolism; steroid biosynthesis.</text>
</comment>
<comment type="subcellular location">
    <subcellularLocation>
        <location>Endoplasmic reticulum membrane</location>
        <topology>Multi-pass membrane protein</topology>
    </subcellularLocation>
</comment>
<comment type="tissue specificity">
    <text evidence="3">Predominantly expressed in liver.</text>
</comment>
<comment type="similarity">
    <text evidence="5">Belongs to the 3-beta-HSD family.</text>
</comment>
<reference key="1">
    <citation type="journal article" date="2000" name="J. Clin. Invest.">
        <title>The bile acid synthetic gene 3beta-hydroxy-delta(5)-C(27)-steroid oxidoreductase is mutated in progressive intrahepatic cholestasis.</title>
        <authorList>
            <person name="Schwarz M."/>
            <person name="Wright A.C."/>
            <person name="Davis D.L."/>
            <person name="Nazer H."/>
            <person name="Bjorkhem I."/>
            <person name="Russell D.W."/>
        </authorList>
    </citation>
    <scope>NUCLEOTIDE SEQUENCE [MRNA]</scope>
    <scope>FUNCTION</scope>
    <scope>TISSUE SPECIFICITY</scope>
    <scope>CATALYTIC ACTIVITY</scope>
    <source>
        <strain>C57BL/6J X 129/SvEv</strain>
    </source>
</reference>
<reference key="2">
    <citation type="journal article" date="2004" name="Genome Res.">
        <title>The status, quality, and expansion of the NIH full-length cDNA project: the Mammalian Gene Collection (MGC).</title>
        <authorList>
            <consortium name="The MGC Project Team"/>
        </authorList>
    </citation>
    <scope>NUCLEOTIDE SEQUENCE [LARGE SCALE MRNA]</scope>
    <source>
        <tissue>Brain</tissue>
    </source>
</reference>
<reference key="3">
    <citation type="journal article" date="2010" name="Cell">
        <title>A tissue-specific atlas of mouse protein phosphorylation and expression.</title>
        <authorList>
            <person name="Huttlin E.L."/>
            <person name="Jedrychowski M.P."/>
            <person name="Elias J.E."/>
            <person name="Goswami T."/>
            <person name="Rad R."/>
            <person name="Beausoleil S.A."/>
            <person name="Villen J."/>
            <person name="Haas W."/>
            <person name="Sowa M.E."/>
            <person name="Gygi S.P."/>
        </authorList>
    </citation>
    <scope>IDENTIFICATION BY MASS SPECTROMETRY [LARGE SCALE ANALYSIS]</scope>
    <source>
        <tissue>Liver</tissue>
    </source>
</reference>
<reference key="4">
    <citation type="journal article" date="2012" name="Immunity">
        <title>Oxysterol gradient generation by lymphoid stromal cells guides activated B cell movement during humoral responses.</title>
        <authorList>
            <person name="Yi T."/>
            <person name="Wang X."/>
            <person name="Kelly L.M."/>
            <person name="An J."/>
            <person name="Xu Y."/>
            <person name="Sailer A.W."/>
            <person name="Gustafsson J.A."/>
            <person name="Russell D.W."/>
            <person name="Cyster J.G."/>
        </authorList>
    </citation>
    <scope>FUNCTION</scope>
</reference>